<organism>
    <name type="scientific">Granulibacter bethesdensis (strain ATCC BAA-1260 / CGDNIH1)</name>
    <dbReference type="NCBI Taxonomy" id="391165"/>
    <lineage>
        <taxon>Bacteria</taxon>
        <taxon>Pseudomonadati</taxon>
        <taxon>Pseudomonadota</taxon>
        <taxon>Alphaproteobacteria</taxon>
        <taxon>Acetobacterales</taxon>
        <taxon>Acetobacteraceae</taxon>
        <taxon>Granulibacter</taxon>
    </lineage>
</organism>
<gene>
    <name evidence="1" type="primary">groEL</name>
    <name evidence="1" type="synonym">groL</name>
    <name type="ordered locus">GbCGDNIH1_2180</name>
</gene>
<comment type="function">
    <text evidence="1">Together with its co-chaperonin GroES, plays an essential role in assisting protein folding. The GroEL-GroES system forms a nano-cage that allows encapsulation of the non-native substrate proteins and provides a physical environment optimized to promote and accelerate protein folding.</text>
</comment>
<comment type="catalytic activity">
    <reaction evidence="1">
        <text>ATP + H2O + a folded polypeptide = ADP + phosphate + an unfolded polypeptide.</text>
        <dbReference type="EC" id="5.6.1.7"/>
    </reaction>
</comment>
<comment type="subunit">
    <text evidence="1">Forms a cylinder of 14 subunits composed of two heptameric rings stacked back-to-back. Interacts with the co-chaperonin GroES.</text>
</comment>
<comment type="subcellular location">
    <subcellularLocation>
        <location evidence="1">Cytoplasm</location>
    </subcellularLocation>
</comment>
<comment type="similarity">
    <text evidence="1">Belongs to the chaperonin (HSP60) family.</text>
</comment>
<dbReference type="EC" id="5.6.1.7" evidence="1"/>
<dbReference type="EMBL" id="CP000394">
    <property type="protein sequence ID" value="ABI63078.1"/>
    <property type="molecule type" value="Genomic_DNA"/>
</dbReference>
<dbReference type="RefSeq" id="WP_011632880.1">
    <property type="nucleotide sequence ID" value="NC_008343.2"/>
</dbReference>
<dbReference type="SMR" id="Q0BQ24"/>
<dbReference type="STRING" id="391165.GbCGDNIH1_2180"/>
<dbReference type="GeneID" id="69746361"/>
<dbReference type="KEGG" id="gbe:GbCGDNIH1_2180"/>
<dbReference type="eggNOG" id="COG0459">
    <property type="taxonomic scope" value="Bacteria"/>
</dbReference>
<dbReference type="HOGENOM" id="CLU_016503_3_0_5"/>
<dbReference type="OrthoDB" id="9766614at2"/>
<dbReference type="Proteomes" id="UP000001963">
    <property type="component" value="Chromosome"/>
</dbReference>
<dbReference type="GO" id="GO:0005737">
    <property type="term" value="C:cytoplasm"/>
    <property type="evidence" value="ECO:0007669"/>
    <property type="project" value="UniProtKB-SubCell"/>
</dbReference>
<dbReference type="GO" id="GO:0005524">
    <property type="term" value="F:ATP binding"/>
    <property type="evidence" value="ECO:0007669"/>
    <property type="project" value="UniProtKB-UniRule"/>
</dbReference>
<dbReference type="GO" id="GO:0140662">
    <property type="term" value="F:ATP-dependent protein folding chaperone"/>
    <property type="evidence" value="ECO:0007669"/>
    <property type="project" value="InterPro"/>
</dbReference>
<dbReference type="GO" id="GO:0016853">
    <property type="term" value="F:isomerase activity"/>
    <property type="evidence" value="ECO:0007669"/>
    <property type="project" value="UniProtKB-KW"/>
</dbReference>
<dbReference type="GO" id="GO:0051082">
    <property type="term" value="F:unfolded protein binding"/>
    <property type="evidence" value="ECO:0007669"/>
    <property type="project" value="UniProtKB-UniRule"/>
</dbReference>
<dbReference type="GO" id="GO:0042026">
    <property type="term" value="P:protein refolding"/>
    <property type="evidence" value="ECO:0007669"/>
    <property type="project" value="UniProtKB-UniRule"/>
</dbReference>
<dbReference type="CDD" id="cd03344">
    <property type="entry name" value="GroEL"/>
    <property type="match status" value="1"/>
</dbReference>
<dbReference type="FunFam" id="1.10.560.10:FF:000001">
    <property type="entry name" value="60 kDa chaperonin"/>
    <property type="match status" value="1"/>
</dbReference>
<dbReference type="FunFam" id="3.50.7.10:FF:000001">
    <property type="entry name" value="60 kDa chaperonin"/>
    <property type="match status" value="1"/>
</dbReference>
<dbReference type="Gene3D" id="3.50.7.10">
    <property type="entry name" value="GroEL"/>
    <property type="match status" value="1"/>
</dbReference>
<dbReference type="Gene3D" id="1.10.560.10">
    <property type="entry name" value="GroEL-like equatorial domain"/>
    <property type="match status" value="1"/>
</dbReference>
<dbReference type="Gene3D" id="3.30.260.10">
    <property type="entry name" value="TCP-1-like chaperonin intermediate domain"/>
    <property type="match status" value="1"/>
</dbReference>
<dbReference type="HAMAP" id="MF_00600">
    <property type="entry name" value="CH60"/>
    <property type="match status" value="1"/>
</dbReference>
<dbReference type="InterPro" id="IPR018370">
    <property type="entry name" value="Chaperonin_Cpn60_CS"/>
</dbReference>
<dbReference type="InterPro" id="IPR001844">
    <property type="entry name" value="Cpn60/GroEL"/>
</dbReference>
<dbReference type="InterPro" id="IPR002423">
    <property type="entry name" value="Cpn60/GroEL/TCP-1"/>
</dbReference>
<dbReference type="InterPro" id="IPR027409">
    <property type="entry name" value="GroEL-like_apical_dom_sf"/>
</dbReference>
<dbReference type="InterPro" id="IPR027413">
    <property type="entry name" value="GROEL-like_equatorial_sf"/>
</dbReference>
<dbReference type="InterPro" id="IPR027410">
    <property type="entry name" value="TCP-1-like_intermed_sf"/>
</dbReference>
<dbReference type="NCBIfam" id="TIGR02348">
    <property type="entry name" value="GroEL"/>
    <property type="match status" value="1"/>
</dbReference>
<dbReference type="NCBIfam" id="NF000592">
    <property type="entry name" value="PRK00013.1"/>
    <property type="match status" value="1"/>
</dbReference>
<dbReference type="NCBIfam" id="NF009487">
    <property type="entry name" value="PRK12849.1"/>
    <property type="match status" value="1"/>
</dbReference>
<dbReference type="NCBIfam" id="NF009488">
    <property type="entry name" value="PRK12850.1"/>
    <property type="match status" value="1"/>
</dbReference>
<dbReference type="NCBIfam" id="NF009489">
    <property type="entry name" value="PRK12851.1"/>
    <property type="match status" value="1"/>
</dbReference>
<dbReference type="PANTHER" id="PTHR45633">
    <property type="entry name" value="60 KDA HEAT SHOCK PROTEIN, MITOCHONDRIAL"/>
    <property type="match status" value="1"/>
</dbReference>
<dbReference type="Pfam" id="PF00118">
    <property type="entry name" value="Cpn60_TCP1"/>
    <property type="match status" value="1"/>
</dbReference>
<dbReference type="PRINTS" id="PR00298">
    <property type="entry name" value="CHAPERONIN60"/>
</dbReference>
<dbReference type="SUPFAM" id="SSF52029">
    <property type="entry name" value="GroEL apical domain-like"/>
    <property type="match status" value="1"/>
</dbReference>
<dbReference type="SUPFAM" id="SSF48592">
    <property type="entry name" value="GroEL equatorial domain-like"/>
    <property type="match status" value="1"/>
</dbReference>
<dbReference type="SUPFAM" id="SSF54849">
    <property type="entry name" value="GroEL-intermediate domain like"/>
    <property type="match status" value="1"/>
</dbReference>
<dbReference type="PROSITE" id="PS00296">
    <property type="entry name" value="CHAPERONINS_CPN60"/>
    <property type="match status" value="1"/>
</dbReference>
<reference key="1">
    <citation type="journal article" date="2007" name="J. Bacteriol.">
        <title>Genome sequence analysis of the emerging human pathogenic acetic acid bacterium Granulibacter bethesdensis.</title>
        <authorList>
            <person name="Greenberg D.E."/>
            <person name="Porcella S.F."/>
            <person name="Zelazny A.M."/>
            <person name="Virtaneva K."/>
            <person name="Sturdevant D.E."/>
            <person name="Kupko J.J. III"/>
            <person name="Barbian K.D."/>
            <person name="Babar A."/>
            <person name="Dorward D.W."/>
            <person name="Holland S.M."/>
        </authorList>
    </citation>
    <scope>NUCLEOTIDE SEQUENCE [LARGE SCALE GENOMIC DNA]</scope>
    <source>
        <strain>ATCC BAA-1260 / CGDNIH1</strain>
    </source>
</reference>
<name>CH60_GRABC</name>
<proteinExistence type="inferred from homology"/>
<sequence>MAAKDVKFGGDARQRMLRGVDILADAVKVTLGPKGRNVVIDKSFGAPRITKDGVSVAKEIELADKFENMGAQMVREVASKTNDKAGDGTTTATVLTQAIVREGAKAVAAGLNPMDLKRGIDKAVAVVIEDLKANSRKITNPSETAQVGTISANGESEIGRMISEAMQKVGNEGVITVEEAKGIQTELDVVEGMQFDRGYVSPYFITNPEKMIAELDNPYILIHEKKLAQLQPLLPLLESVVQSGRPLLIIAEDVEGEALATLVVNKLRGGLKIAAVKAPGFGDRRKAMLEDIAILTGGTVISEDLGIKLETVTLQQLGTAKRVLIEKENTTIVEGAGSPDDIKGRCSQIRAQAEETTSDYDREKLQERLAKLAGGVAVIRVGGSTEVEVKERKDRVDDALHATRAAVEEGIVPGGGVALARASLKLADLGYDNGDQKVGIEIIRRALQSPLRQISENAGEDGAVIAGKVLENGTYNFGFDAQTGEFKDLVSAGIIDPAKVVRTALQDAASVAALLITTEAMIAEKPEKKAPAGAPPGGMGDMDF</sequence>
<keyword id="KW-0067">ATP-binding</keyword>
<keyword id="KW-0143">Chaperone</keyword>
<keyword id="KW-0963">Cytoplasm</keyword>
<keyword id="KW-0413">Isomerase</keyword>
<keyword id="KW-0547">Nucleotide-binding</keyword>
<keyword id="KW-1185">Reference proteome</keyword>
<accession>Q0BQ24</accession>
<protein>
    <recommendedName>
        <fullName evidence="1">Chaperonin GroEL</fullName>
        <ecNumber evidence="1">5.6.1.7</ecNumber>
    </recommendedName>
    <alternativeName>
        <fullName evidence="1">60 kDa chaperonin</fullName>
    </alternativeName>
    <alternativeName>
        <fullName evidence="1">Chaperonin-60</fullName>
        <shortName evidence="1">Cpn60</shortName>
    </alternativeName>
</protein>
<feature type="chain" id="PRO_1000025786" description="Chaperonin GroEL">
    <location>
        <begin position="1"/>
        <end position="544"/>
    </location>
</feature>
<feature type="binding site" evidence="1">
    <location>
        <begin position="30"/>
        <end position="33"/>
    </location>
    <ligand>
        <name>ATP</name>
        <dbReference type="ChEBI" id="CHEBI:30616"/>
    </ligand>
</feature>
<feature type="binding site" evidence="1">
    <location>
        <position position="51"/>
    </location>
    <ligand>
        <name>ATP</name>
        <dbReference type="ChEBI" id="CHEBI:30616"/>
    </ligand>
</feature>
<feature type="binding site" evidence="1">
    <location>
        <begin position="87"/>
        <end position="91"/>
    </location>
    <ligand>
        <name>ATP</name>
        <dbReference type="ChEBI" id="CHEBI:30616"/>
    </ligand>
</feature>
<feature type="binding site" evidence="1">
    <location>
        <position position="415"/>
    </location>
    <ligand>
        <name>ATP</name>
        <dbReference type="ChEBI" id="CHEBI:30616"/>
    </ligand>
</feature>
<feature type="binding site" evidence="1">
    <location>
        <position position="496"/>
    </location>
    <ligand>
        <name>ATP</name>
        <dbReference type="ChEBI" id="CHEBI:30616"/>
    </ligand>
</feature>
<evidence type="ECO:0000255" key="1">
    <source>
        <dbReference type="HAMAP-Rule" id="MF_00600"/>
    </source>
</evidence>